<keyword id="KW-1185">Reference proteome</keyword>
<keyword id="KW-0687">Ribonucleoprotein</keyword>
<keyword id="KW-0689">Ribosomal protein</keyword>
<keyword id="KW-0694">RNA-binding</keyword>
<keyword id="KW-0699">rRNA-binding</keyword>
<reference key="1">
    <citation type="journal article" date="2007" name="Proc. Natl. Acad. Sci. U.S.A.">
        <title>The Orientia tsutsugamushi genome reveals massive proliferation of conjugative type IV secretion system and host-cell interaction genes.</title>
        <authorList>
            <person name="Cho N.-H."/>
            <person name="Kim H.-R."/>
            <person name="Lee J.-H."/>
            <person name="Kim S.-Y."/>
            <person name="Kim J."/>
            <person name="Cha S."/>
            <person name="Kim S.-Y."/>
            <person name="Darby A.C."/>
            <person name="Fuxelius H.-H."/>
            <person name="Yin J."/>
            <person name="Kim J.H."/>
            <person name="Kim J."/>
            <person name="Lee S.J."/>
            <person name="Koh Y.-S."/>
            <person name="Jang W.-J."/>
            <person name="Park K.-H."/>
            <person name="Andersson S.G.E."/>
            <person name="Choi M.-S."/>
            <person name="Kim I.-S."/>
        </authorList>
    </citation>
    <scope>NUCLEOTIDE SEQUENCE [LARGE SCALE GENOMIC DNA]</scope>
    <source>
        <strain>Boryong</strain>
    </source>
</reference>
<feature type="chain" id="PRO_1000014618" description="Small ribosomal subunit protein bS20">
    <location>
        <begin position="1"/>
        <end position="90"/>
    </location>
</feature>
<feature type="region of interest" description="Disordered" evidence="2">
    <location>
        <begin position="1"/>
        <end position="25"/>
    </location>
</feature>
<feature type="compositionally biased region" description="Polar residues" evidence="2">
    <location>
        <begin position="1"/>
        <end position="10"/>
    </location>
</feature>
<comment type="function">
    <text evidence="1">Binds directly to 16S ribosomal RNA.</text>
</comment>
<comment type="similarity">
    <text evidence="1">Belongs to the bacterial ribosomal protein bS20 family.</text>
</comment>
<accession>A5CCI7</accession>
<proteinExistence type="inferred from homology"/>
<protein>
    <recommendedName>
        <fullName evidence="1">Small ribosomal subunit protein bS20</fullName>
    </recommendedName>
    <alternativeName>
        <fullName evidence="3">30S ribosomal protein S20</fullName>
    </alternativeName>
</protein>
<gene>
    <name evidence="1" type="primary">rpsT</name>
    <name type="ordered locus">OTBS_0351</name>
</gene>
<evidence type="ECO:0000255" key="1">
    <source>
        <dbReference type="HAMAP-Rule" id="MF_00500"/>
    </source>
</evidence>
<evidence type="ECO:0000256" key="2">
    <source>
        <dbReference type="SAM" id="MobiDB-lite"/>
    </source>
</evidence>
<evidence type="ECO:0000305" key="3"/>
<organism>
    <name type="scientific">Orientia tsutsugamushi (strain Boryong)</name>
    <name type="common">Rickettsia tsutsugamushi</name>
    <dbReference type="NCBI Taxonomy" id="357244"/>
    <lineage>
        <taxon>Bacteria</taxon>
        <taxon>Pseudomonadati</taxon>
        <taxon>Pseudomonadota</taxon>
        <taxon>Alphaproteobacteria</taxon>
        <taxon>Rickettsiales</taxon>
        <taxon>Rickettsiaceae</taxon>
        <taxon>Rickettsieae</taxon>
        <taxon>Orientia</taxon>
    </lineage>
</organism>
<name>RS20_ORITB</name>
<sequence>MANHKSTQKSIRQDQKRNLINKSRKSNVKTFLKRVTLAINAGDKKVASEALSAAHSKLAKAANKGIFKLNTVSRKVSRLSRKIKQLEDKI</sequence>
<dbReference type="EMBL" id="AM494475">
    <property type="protein sequence ID" value="CAM79417.1"/>
    <property type="molecule type" value="Genomic_DNA"/>
</dbReference>
<dbReference type="RefSeq" id="WP_011944415.1">
    <property type="nucleotide sequence ID" value="NC_009488.1"/>
</dbReference>
<dbReference type="SMR" id="A5CCI7"/>
<dbReference type="KEGG" id="ots:OTBS_0351"/>
<dbReference type="eggNOG" id="COG0268">
    <property type="taxonomic scope" value="Bacteria"/>
</dbReference>
<dbReference type="HOGENOM" id="CLU_160655_3_0_5"/>
<dbReference type="Proteomes" id="UP000001565">
    <property type="component" value="Chromosome"/>
</dbReference>
<dbReference type="GO" id="GO:0015935">
    <property type="term" value="C:small ribosomal subunit"/>
    <property type="evidence" value="ECO:0007669"/>
    <property type="project" value="TreeGrafter"/>
</dbReference>
<dbReference type="GO" id="GO:0070181">
    <property type="term" value="F:small ribosomal subunit rRNA binding"/>
    <property type="evidence" value="ECO:0007669"/>
    <property type="project" value="TreeGrafter"/>
</dbReference>
<dbReference type="GO" id="GO:0003735">
    <property type="term" value="F:structural constituent of ribosome"/>
    <property type="evidence" value="ECO:0007669"/>
    <property type="project" value="InterPro"/>
</dbReference>
<dbReference type="GO" id="GO:0006412">
    <property type="term" value="P:translation"/>
    <property type="evidence" value="ECO:0007669"/>
    <property type="project" value="UniProtKB-UniRule"/>
</dbReference>
<dbReference type="Gene3D" id="1.20.58.110">
    <property type="entry name" value="Ribosomal protein S20"/>
    <property type="match status" value="1"/>
</dbReference>
<dbReference type="HAMAP" id="MF_00500">
    <property type="entry name" value="Ribosomal_bS20"/>
    <property type="match status" value="1"/>
</dbReference>
<dbReference type="InterPro" id="IPR002583">
    <property type="entry name" value="Ribosomal_bS20"/>
</dbReference>
<dbReference type="InterPro" id="IPR036510">
    <property type="entry name" value="Ribosomal_bS20_sf"/>
</dbReference>
<dbReference type="NCBIfam" id="TIGR00029">
    <property type="entry name" value="S20"/>
    <property type="match status" value="1"/>
</dbReference>
<dbReference type="PANTHER" id="PTHR33398">
    <property type="entry name" value="30S RIBOSOMAL PROTEIN S20"/>
    <property type="match status" value="1"/>
</dbReference>
<dbReference type="PANTHER" id="PTHR33398:SF1">
    <property type="entry name" value="SMALL RIBOSOMAL SUBUNIT PROTEIN BS20C"/>
    <property type="match status" value="1"/>
</dbReference>
<dbReference type="Pfam" id="PF01649">
    <property type="entry name" value="Ribosomal_S20p"/>
    <property type="match status" value="1"/>
</dbReference>
<dbReference type="SUPFAM" id="SSF46992">
    <property type="entry name" value="Ribosomal protein S20"/>
    <property type="match status" value="1"/>
</dbReference>